<organism>
    <name type="scientific">Macrococcus caseolyticus (strain JCSC5402)</name>
    <name type="common">Macrococcoides caseolyticum</name>
    <dbReference type="NCBI Taxonomy" id="458233"/>
    <lineage>
        <taxon>Bacteria</taxon>
        <taxon>Bacillati</taxon>
        <taxon>Bacillota</taxon>
        <taxon>Bacilli</taxon>
        <taxon>Bacillales</taxon>
        <taxon>Staphylococcaceae</taxon>
        <taxon>Macrococcoides</taxon>
    </lineage>
</organism>
<evidence type="ECO:0000255" key="1">
    <source>
        <dbReference type="HAMAP-Rule" id="MF_00110"/>
    </source>
</evidence>
<sequence length="357" mass="41136">MKLTTNYNDNNYDIFVEYNVLNKDYDFNYYDKRIALIDESVYRLHQQKIDLFLNKHSIFKLLIPGGEQVKTMHHYSTVVEKLLSMHVTRHSCLFAIGGGATGDFTGFVAATLLRGIHFIQVPTTILAHDASIGGKTGINASSGKNLIGAFKRPDMVLYDLDFLETLSQIEKLSGFAEIIKHVLLNANGHISKSETVLEIMHDVKDEVCLSELHAIDKWITFGIQTKMKVVHDDEFESGVRKFLNFGHTFGHAIEFHHKLPHGIAVMHGMIYALLLSDVTESDIMSLMRWMHRLGLKKLVYDNFDIYYELMRQDKKNEANEINFVLYYENNGYKVEQVDVKRLRKAFERLRKLEGELL</sequence>
<feature type="chain" id="PRO_1000119085" description="3-dehydroquinate synthase">
    <location>
        <begin position="1"/>
        <end position="357"/>
    </location>
</feature>
<feature type="binding site" evidence="1">
    <location>
        <begin position="99"/>
        <end position="103"/>
    </location>
    <ligand>
        <name>NAD(+)</name>
        <dbReference type="ChEBI" id="CHEBI:57540"/>
    </ligand>
</feature>
<feature type="binding site" evidence="1">
    <location>
        <begin position="123"/>
        <end position="124"/>
    </location>
    <ligand>
        <name>NAD(+)</name>
        <dbReference type="ChEBI" id="CHEBI:57540"/>
    </ligand>
</feature>
<feature type="binding site" evidence="1">
    <location>
        <position position="135"/>
    </location>
    <ligand>
        <name>NAD(+)</name>
        <dbReference type="ChEBI" id="CHEBI:57540"/>
    </ligand>
</feature>
<feature type="binding site" evidence="1">
    <location>
        <position position="144"/>
    </location>
    <ligand>
        <name>NAD(+)</name>
        <dbReference type="ChEBI" id="CHEBI:57540"/>
    </ligand>
</feature>
<feature type="binding site" evidence="1">
    <location>
        <begin position="162"/>
        <end position="165"/>
    </location>
    <ligand>
        <name>NAD(+)</name>
        <dbReference type="ChEBI" id="CHEBI:57540"/>
    </ligand>
</feature>
<feature type="binding site" evidence="1">
    <location>
        <position position="177"/>
    </location>
    <ligand>
        <name>Zn(2+)</name>
        <dbReference type="ChEBI" id="CHEBI:29105"/>
    </ligand>
</feature>
<feature type="binding site" evidence="1">
    <location>
        <position position="247"/>
    </location>
    <ligand>
        <name>Zn(2+)</name>
        <dbReference type="ChEBI" id="CHEBI:29105"/>
    </ligand>
</feature>
<feature type="binding site" evidence="1">
    <location>
        <position position="261"/>
    </location>
    <ligand>
        <name>Zn(2+)</name>
        <dbReference type="ChEBI" id="CHEBI:29105"/>
    </ligand>
</feature>
<comment type="function">
    <text evidence="1">Catalyzes the conversion of 3-deoxy-D-arabino-heptulosonate 7-phosphate (DAHP) to dehydroquinate (DHQ).</text>
</comment>
<comment type="catalytic activity">
    <reaction evidence="1">
        <text>7-phospho-2-dehydro-3-deoxy-D-arabino-heptonate = 3-dehydroquinate + phosphate</text>
        <dbReference type="Rhea" id="RHEA:21968"/>
        <dbReference type="ChEBI" id="CHEBI:32364"/>
        <dbReference type="ChEBI" id="CHEBI:43474"/>
        <dbReference type="ChEBI" id="CHEBI:58394"/>
        <dbReference type="EC" id="4.2.3.4"/>
    </reaction>
</comment>
<comment type="cofactor">
    <cofactor evidence="1">
        <name>Co(2+)</name>
        <dbReference type="ChEBI" id="CHEBI:48828"/>
    </cofactor>
    <cofactor evidence="1">
        <name>Zn(2+)</name>
        <dbReference type="ChEBI" id="CHEBI:29105"/>
    </cofactor>
    <text evidence="1">Binds 1 divalent metal cation per subunit. Can use either Co(2+) or Zn(2+).</text>
</comment>
<comment type="cofactor">
    <cofactor evidence="1">
        <name>NAD(+)</name>
        <dbReference type="ChEBI" id="CHEBI:57540"/>
    </cofactor>
</comment>
<comment type="pathway">
    <text evidence="1">Metabolic intermediate biosynthesis; chorismate biosynthesis; chorismate from D-erythrose 4-phosphate and phosphoenolpyruvate: step 2/7.</text>
</comment>
<comment type="subcellular location">
    <subcellularLocation>
        <location evidence="1">Cytoplasm</location>
    </subcellularLocation>
</comment>
<comment type="similarity">
    <text evidence="1">Belongs to the sugar phosphate cyclases superfamily. Dehydroquinate synthase family.</text>
</comment>
<protein>
    <recommendedName>
        <fullName evidence="1">3-dehydroquinate synthase</fullName>
        <shortName evidence="1">DHQS</shortName>
        <ecNumber evidence="1">4.2.3.4</ecNumber>
    </recommendedName>
</protein>
<name>AROB_MACCJ</name>
<gene>
    <name evidence="1" type="primary">aroB</name>
    <name type="ordered locus">MCCL_1118</name>
</gene>
<reference key="1">
    <citation type="journal article" date="2009" name="J. Bacteriol.">
        <title>Complete genome sequence of Macrococcus caseolyticus strain JCSCS5402, reflecting the ancestral genome of the human-pathogenic staphylococci.</title>
        <authorList>
            <person name="Baba T."/>
            <person name="Kuwahara-Arai K."/>
            <person name="Uchiyama I."/>
            <person name="Takeuchi F."/>
            <person name="Ito T."/>
            <person name="Hiramatsu K."/>
        </authorList>
    </citation>
    <scope>NUCLEOTIDE SEQUENCE [LARGE SCALE GENOMIC DNA]</scope>
    <source>
        <strain>JCSC5402</strain>
    </source>
</reference>
<keyword id="KW-0028">Amino-acid biosynthesis</keyword>
<keyword id="KW-0057">Aromatic amino acid biosynthesis</keyword>
<keyword id="KW-0170">Cobalt</keyword>
<keyword id="KW-0963">Cytoplasm</keyword>
<keyword id="KW-0456">Lyase</keyword>
<keyword id="KW-0479">Metal-binding</keyword>
<keyword id="KW-0520">NAD</keyword>
<keyword id="KW-0547">Nucleotide-binding</keyword>
<keyword id="KW-1185">Reference proteome</keyword>
<keyword id="KW-0862">Zinc</keyword>
<accession>B9E6K7</accession>
<proteinExistence type="inferred from homology"/>
<dbReference type="EC" id="4.2.3.4" evidence="1"/>
<dbReference type="EMBL" id="AP009484">
    <property type="protein sequence ID" value="BAH17825.1"/>
    <property type="molecule type" value="Genomic_DNA"/>
</dbReference>
<dbReference type="RefSeq" id="WP_012657023.1">
    <property type="nucleotide sequence ID" value="NC_011999.1"/>
</dbReference>
<dbReference type="SMR" id="B9E6K7"/>
<dbReference type="STRING" id="458233.MCCL_1118"/>
<dbReference type="KEGG" id="mcl:MCCL_1118"/>
<dbReference type="eggNOG" id="COG0337">
    <property type="taxonomic scope" value="Bacteria"/>
</dbReference>
<dbReference type="HOGENOM" id="CLU_001201_0_1_9"/>
<dbReference type="OrthoDB" id="9806583at2"/>
<dbReference type="UniPathway" id="UPA00053">
    <property type="reaction ID" value="UER00085"/>
</dbReference>
<dbReference type="Proteomes" id="UP000001383">
    <property type="component" value="Chromosome"/>
</dbReference>
<dbReference type="GO" id="GO:0005737">
    <property type="term" value="C:cytoplasm"/>
    <property type="evidence" value="ECO:0007669"/>
    <property type="project" value="UniProtKB-SubCell"/>
</dbReference>
<dbReference type="GO" id="GO:0003856">
    <property type="term" value="F:3-dehydroquinate synthase activity"/>
    <property type="evidence" value="ECO:0007669"/>
    <property type="project" value="UniProtKB-UniRule"/>
</dbReference>
<dbReference type="GO" id="GO:0046872">
    <property type="term" value="F:metal ion binding"/>
    <property type="evidence" value="ECO:0007669"/>
    <property type="project" value="UniProtKB-KW"/>
</dbReference>
<dbReference type="GO" id="GO:0000166">
    <property type="term" value="F:nucleotide binding"/>
    <property type="evidence" value="ECO:0007669"/>
    <property type="project" value="UniProtKB-KW"/>
</dbReference>
<dbReference type="GO" id="GO:0008652">
    <property type="term" value="P:amino acid biosynthetic process"/>
    <property type="evidence" value="ECO:0007669"/>
    <property type="project" value="UniProtKB-KW"/>
</dbReference>
<dbReference type="GO" id="GO:0009073">
    <property type="term" value="P:aromatic amino acid family biosynthetic process"/>
    <property type="evidence" value="ECO:0007669"/>
    <property type="project" value="UniProtKB-KW"/>
</dbReference>
<dbReference type="GO" id="GO:0009423">
    <property type="term" value="P:chorismate biosynthetic process"/>
    <property type="evidence" value="ECO:0007669"/>
    <property type="project" value="UniProtKB-UniRule"/>
</dbReference>
<dbReference type="CDD" id="cd08195">
    <property type="entry name" value="DHQS"/>
    <property type="match status" value="1"/>
</dbReference>
<dbReference type="Gene3D" id="3.40.50.1970">
    <property type="match status" value="1"/>
</dbReference>
<dbReference type="Gene3D" id="1.20.1090.10">
    <property type="entry name" value="Dehydroquinate synthase-like - alpha domain"/>
    <property type="match status" value="1"/>
</dbReference>
<dbReference type="HAMAP" id="MF_00110">
    <property type="entry name" value="DHQ_synthase"/>
    <property type="match status" value="1"/>
</dbReference>
<dbReference type="InterPro" id="IPR050071">
    <property type="entry name" value="Dehydroquinate_synthase"/>
</dbReference>
<dbReference type="InterPro" id="IPR016037">
    <property type="entry name" value="DHQ_synth_AroB"/>
</dbReference>
<dbReference type="InterPro" id="IPR030963">
    <property type="entry name" value="DHQ_synth_fam"/>
</dbReference>
<dbReference type="InterPro" id="IPR030960">
    <property type="entry name" value="DHQS/DOIS_N"/>
</dbReference>
<dbReference type="InterPro" id="IPR056179">
    <property type="entry name" value="DHQS_C"/>
</dbReference>
<dbReference type="NCBIfam" id="TIGR01357">
    <property type="entry name" value="aroB"/>
    <property type="match status" value="1"/>
</dbReference>
<dbReference type="PANTHER" id="PTHR43622">
    <property type="entry name" value="3-DEHYDROQUINATE SYNTHASE"/>
    <property type="match status" value="1"/>
</dbReference>
<dbReference type="PANTHER" id="PTHR43622:SF7">
    <property type="entry name" value="3-DEHYDROQUINATE SYNTHASE, CHLOROPLASTIC"/>
    <property type="match status" value="1"/>
</dbReference>
<dbReference type="Pfam" id="PF01761">
    <property type="entry name" value="DHQ_synthase"/>
    <property type="match status" value="1"/>
</dbReference>
<dbReference type="Pfam" id="PF24621">
    <property type="entry name" value="DHQS_C"/>
    <property type="match status" value="1"/>
</dbReference>
<dbReference type="PIRSF" id="PIRSF001455">
    <property type="entry name" value="DHQ_synth"/>
    <property type="match status" value="1"/>
</dbReference>
<dbReference type="SUPFAM" id="SSF56796">
    <property type="entry name" value="Dehydroquinate synthase-like"/>
    <property type="match status" value="1"/>
</dbReference>